<keyword id="KW-0687">Ribonucleoprotein</keyword>
<keyword id="KW-0689">Ribosomal protein</keyword>
<keyword id="KW-0694">RNA-binding</keyword>
<keyword id="KW-0699">rRNA-binding</keyword>
<reference key="1">
    <citation type="journal article" date="2012" name="BMC Microbiol.">
        <title>Genome sequence of Desulfitobacterium hafniense DCB-2, a Gram-positive anaerobe capable of dehalogenation and metal reduction.</title>
        <authorList>
            <person name="Kim S.H."/>
            <person name="Harzman C."/>
            <person name="Davis J.K."/>
            <person name="Hutcheson R."/>
            <person name="Broderick J.B."/>
            <person name="Marsh T.L."/>
            <person name="Tiedje J.M."/>
        </authorList>
    </citation>
    <scope>NUCLEOTIDE SEQUENCE [LARGE SCALE GENOMIC DNA]</scope>
    <source>
        <strain>DSM 10664 / DCB-2</strain>
    </source>
</reference>
<comment type="function">
    <text evidence="1">Binds to 23S rRNA. Forms part of two intersubunit bridges in the 70S ribosome.</text>
</comment>
<comment type="subunit">
    <text evidence="1">Part of the 50S ribosomal subunit. Forms a cluster with proteins L3 and L19. In the 70S ribosome, L14 and L19 interact and together make contacts with the 16S rRNA in bridges B5 and B8.</text>
</comment>
<comment type="similarity">
    <text evidence="1">Belongs to the universal ribosomal protein uL14 family.</text>
</comment>
<dbReference type="EMBL" id="CP001336">
    <property type="protein sequence ID" value="ACL18499.1"/>
    <property type="molecule type" value="Genomic_DNA"/>
</dbReference>
<dbReference type="RefSeq" id="WP_005810144.1">
    <property type="nucleotide sequence ID" value="NC_011830.1"/>
</dbReference>
<dbReference type="SMR" id="B8G1X6"/>
<dbReference type="KEGG" id="dhd:Dhaf_0432"/>
<dbReference type="HOGENOM" id="CLU_095071_2_1_9"/>
<dbReference type="Proteomes" id="UP000007726">
    <property type="component" value="Chromosome"/>
</dbReference>
<dbReference type="GO" id="GO:0022625">
    <property type="term" value="C:cytosolic large ribosomal subunit"/>
    <property type="evidence" value="ECO:0007669"/>
    <property type="project" value="TreeGrafter"/>
</dbReference>
<dbReference type="GO" id="GO:0070180">
    <property type="term" value="F:large ribosomal subunit rRNA binding"/>
    <property type="evidence" value="ECO:0007669"/>
    <property type="project" value="TreeGrafter"/>
</dbReference>
<dbReference type="GO" id="GO:0003735">
    <property type="term" value="F:structural constituent of ribosome"/>
    <property type="evidence" value="ECO:0007669"/>
    <property type="project" value="InterPro"/>
</dbReference>
<dbReference type="GO" id="GO:0006412">
    <property type="term" value="P:translation"/>
    <property type="evidence" value="ECO:0007669"/>
    <property type="project" value="UniProtKB-UniRule"/>
</dbReference>
<dbReference type="CDD" id="cd00337">
    <property type="entry name" value="Ribosomal_uL14"/>
    <property type="match status" value="1"/>
</dbReference>
<dbReference type="FunFam" id="2.40.150.20:FF:000001">
    <property type="entry name" value="50S ribosomal protein L14"/>
    <property type="match status" value="1"/>
</dbReference>
<dbReference type="Gene3D" id="2.40.150.20">
    <property type="entry name" value="Ribosomal protein L14"/>
    <property type="match status" value="1"/>
</dbReference>
<dbReference type="HAMAP" id="MF_01367">
    <property type="entry name" value="Ribosomal_uL14"/>
    <property type="match status" value="1"/>
</dbReference>
<dbReference type="InterPro" id="IPR000218">
    <property type="entry name" value="Ribosomal_uL14"/>
</dbReference>
<dbReference type="InterPro" id="IPR005745">
    <property type="entry name" value="Ribosomal_uL14_bac-type"/>
</dbReference>
<dbReference type="InterPro" id="IPR019972">
    <property type="entry name" value="Ribosomal_uL14_CS"/>
</dbReference>
<dbReference type="InterPro" id="IPR036853">
    <property type="entry name" value="Ribosomal_uL14_sf"/>
</dbReference>
<dbReference type="NCBIfam" id="TIGR01067">
    <property type="entry name" value="rplN_bact"/>
    <property type="match status" value="1"/>
</dbReference>
<dbReference type="PANTHER" id="PTHR11761">
    <property type="entry name" value="50S/60S RIBOSOMAL PROTEIN L14/L23"/>
    <property type="match status" value="1"/>
</dbReference>
<dbReference type="PANTHER" id="PTHR11761:SF3">
    <property type="entry name" value="LARGE RIBOSOMAL SUBUNIT PROTEIN UL14M"/>
    <property type="match status" value="1"/>
</dbReference>
<dbReference type="Pfam" id="PF00238">
    <property type="entry name" value="Ribosomal_L14"/>
    <property type="match status" value="1"/>
</dbReference>
<dbReference type="SMART" id="SM01374">
    <property type="entry name" value="Ribosomal_L14"/>
    <property type="match status" value="1"/>
</dbReference>
<dbReference type="SUPFAM" id="SSF50193">
    <property type="entry name" value="Ribosomal protein L14"/>
    <property type="match status" value="1"/>
</dbReference>
<dbReference type="PROSITE" id="PS00049">
    <property type="entry name" value="RIBOSOMAL_L14"/>
    <property type="match status" value="1"/>
</dbReference>
<protein>
    <recommendedName>
        <fullName evidence="1">Large ribosomal subunit protein uL14</fullName>
    </recommendedName>
    <alternativeName>
        <fullName evidence="2">50S ribosomal protein L14</fullName>
    </alternativeName>
</protein>
<proteinExistence type="inferred from homology"/>
<name>RL14_DESHD</name>
<evidence type="ECO:0000255" key="1">
    <source>
        <dbReference type="HAMAP-Rule" id="MF_01367"/>
    </source>
</evidence>
<evidence type="ECO:0000305" key="2"/>
<organism>
    <name type="scientific">Desulfitobacterium hafniense (strain DSM 10664 / DCB-2)</name>
    <dbReference type="NCBI Taxonomy" id="272564"/>
    <lineage>
        <taxon>Bacteria</taxon>
        <taxon>Bacillati</taxon>
        <taxon>Bacillota</taxon>
        <taxon>Clostridia</taxon>
        <taxon>Eubacteriales</taxon>
        <taxon>Desulfitobacteriaceae</taxon>
        <taxon>Desulfitobacterium</taxon>
    </lineage>
</organism>
<feature type="chain" id="PRO_1000166917" description="Large ribosomal subunit protein uL14">
    <location>
        <begin position="1"/>
        <end position="122"/>
    </location>
</feature>
<accession>B8G1X6</accession>
<gene>
    <name evidence="1" type="primary">rplN</name>
    <name type="ordered locus">Dhaf_0432</name>
</gene>
<sequence>MIQVQTRLRVGDNSGAKELMCIKVLGGSMRRYASIGDIIVASVKEATPGGVVKKGDVVKAVVVRTKKEIKRKDGTYIRFSENAAVVIKDDRSPRGTRIFGPVARELRDRDFMKIISLAPEVI</sequence>